<gene>
    <name evidence="10" type="primary">nfi-1</name>
    <name evidence="10" type="ORF">ZK1290.4</name>
</gene>
<evidence type="ECO:0000255" key="1">
    <source>
        <dbReference type="PROSITE-ProRule" id="PRU00436"/>
    </source>
</evidence>
<evidence type="ECO:0000256" key="2">
    <source>
        <dbReference type="SAM" id="MobiDB-lite"/>
    </source>
</evidence>
<evidence type="ECO:0000269" key="3">
    <source>
    </source>
</evidence>
<evidence type="ECO:0000269" key="4">
    <source>
    </source>
</evidence>
<evidence type="ECO:0000269" key="5">
    <source>
    </source>
</evidence>
<evidence type="ECO:0000305" key="6"/>
<evidence type="ECO:0000312" key="7">
    <source>
        <dbReference type="Proteomes" id="UP000001940"/>
    </source>
</evidence>
<evidence type="ECO:0000312" key="8">
    <source>
        <dbReference type="WormBase" id="ZK1290.4a"/>
    </source>
</evidence>
<evidence type="ECO:0000312" key="9">
    <source>
        <dbReference type="WormBase" id="ZK1290.4b"/>
    </source>
</evidence>
<evidence type="ECO:0000312" key="10">
    <source>
        <dbReference type="WormBase" id="ZK1290.4c"/>
    </source>
</evidence>
<organism evidence="7">
    <name type="scientific">Caenorhabditis elegans</name>
    <dbReference type="NCBI Taxonomy" id="6239"/>
    <lineage>
        <taxon>Eukaryota</taxon>
        <taxon>Metazoa</taxon>
        <taxon>Ecdysozoa</taxon>
        <taxon>Nematoda</taxon>
        <taxon>Chromadorea</taxon>
        <taxon>Rhabditida</taxon>
        <taxon>Rhabditina</taxon>
        <taxon>Rhabditomorpha</taxon>
        <taxon>Rhabditoidea</taxon>
        <taxon>Rhabditidae</taxon>
        <taxon>Peloderinae</taxon>
        <taxon>Caenorhabditis</taxon>
    </lineage>
</organism>
<proteinExistence type="evidence at transcript level"/>
<protein>
    <recommendedName>
        <fullName evidence="10">Nuclear factor I family protein</fullName>
    </recommendedName>
</protein>
<name>NFI1_CAEEL</name>
<feature type="chain" id="PRO_0000452408" description="Nuclear factor I family protein">
    <location>
        <begin position="1"/>
        <end position="823"/>
    </location>
</feature>
<feature type="DNA-binding region" description="CTF/NF-I" evidence="1">
    <location>
        <begin position="61"/>
        <end position="253"/>
    </location>
</feature>
<feature type="region of interest" description="Disordered" evidence="2">
    <location>
        <begin position="1"/>
        <end position="56"/>
    </location>
</feature>
<feature type="region of interest" description="Disordered" evidence="2">
    <location>
        <begin position="364"/>
        <end position="408"/>
    </location>
</feature>
<feature type="region of interest" description="Disordered" evidence="2">
    <location>
        <begin position="433"/>
        <end position="468"/>
    </location>
</feature>
<feature type="region of interest" description="Disordered" evidence="2">
    <location>
        <begin position="777"/>
        <end position="823"/>
    </location>
</feature>
<feature type="compositionally biased region" description="Low complexity" evidence="2">
    <location>
        <begin position="10"/>
        <end position="25"/>
    </location>
</feature>
<feature type="compositionally biased region" description="Polar residues" evidence="2">
    <location>
        <begin position="26"/>
        <end position="52"/>
    </location>
</feature>
<feature type="compositionally biased region" description="Basic and acidic residues" evidence="2">
    <location>
        <begin position="386"/>
        <end position="396"/>
    </location>
</feature>
<feature type="compositionally biased region" description="Polar residues" evidence="2">
    <location>
        <begin position="433"/>
        <end position="447"/>
    </location>
</feature>
<feature type="compositionally biased region" description="Low complexity" evidence="2">
    <location>
        <begin position="777"/>
        <end position="794"/>
    </location>
</feature>
<feature type="splice variant" id="VSP_061000" description="In isoform b.">
    <location>
        <begin position="1"/>
        <end position="36"/>
    </location>
</feature>
<feature type="splice variant" id="VSP_061001" description="In isoform a.">
    <location>
        <begin position="54"/>
        <end position="69"/>
    </location>
</feature>
<dbReference type="EMBL" id="BX284602">
    <property type="protein sequence ID" value="CCD65933.1"/>
    <property type="molecule type" value="Genomic_DNA"/>
</dbReference>
<dbReference type="EMBL" id="BX284602">
    <property type="protein sequence ID" value="CCD65934.1"/>
    <property type="molecule type" value="Genomic_DNA"/>
</dbReference>
<dbReference type="EMBL" id="BX284602">
    <property type="protein sequence ID" value="CCD65935.1"/>
    <property type="molecule type" value="Genomic_DNA"/>
</dbReference>
<dbReference type="RefSeq" id="NP_001022505.1">
    <molecule id="Q5H9N3-3"/>
    <property type="nucleotide sequence ID" value="NM_001027334.3"/>
</dbReference>
<dbReference type="RefSeq" id="NP_001022506.1">
    <property type="nucleotide sequence ID" value="NM_001027335.3"/>
</dbReference>
<dbReference type="RefSeq" id="NP_001022507.1">
    <property type="nucleotide sequence ID" value="NM_001027336.3"/>
</dbReference>
<dbReference type="RefSeq" id="NP_001367579.1">
    <molecule id="Q5H9N3-2"/>
    <property type="nucleotide sequence ID" value="NM_001381499.3"/>
</dbReference>
<dbReference type="RefSeq" id="NP_001367580.1">
    <molecule id="Q5H9N3-1"/>
    <property type="nucleotide sequence ID" value="NM_001381498.1"/>
</dbReference>
<dbReference type="SMR" id="Q5H9N3"/>
<dbReference type="DIP" id="DIP-27009N"/>
<dbReference type="FunCoup" id="Q5H9N3">
    <property type="interactions" value="425"/>
</dbReference>
<dbReference type="IntAct" id="Q5H9N3">
    <property type="interactions" value="12"/>
</dbReference>
<dbReference type="STRING" id="6239.ZK1290.4c.1"/>
<dbReference type="PaxDb" id="6239-ZK1290.4c"/>
<dbReference type="EnsemblMetazoa" id="ZK1290.4a.1">
    <molecule id="Q5H9N3-3"/>
    <property type="protein sequence ID" value="ZK1290.4a.1"/>
    <property type="gene ID" value="WBGene00003592"/>
</dbReference>
<dbReference type="EnsemblMetazoa" id="ZK1290.4b.1">
    <molecule id="Q5H9N3-2"/>
    <property type="protein sequence ID" value="ZK1290.4b.1"/>
    <property type="gene ID" value="WBGene00003592"/>
</dbReference>
<dbReference type="EnsemblMetazoa" id="ZK1290.4b.2">
    <molecule id="Q5H9N3-2"/>
    <property type="protein sequence ID" value="ZK1290.4b.2"/>
    <property type="gene ID" value="WBGene00003592"/>
</dbReference>
<dbReference type="EnsemblMetazoa" id="ZK1290.4b.3">
    <molecule id="Q5H9N3-2"/>
    <property type="protein sequence ID" value="ZK1290.4b.3"/>
    <property type="gene ID" value="WBGene00003592"/>
</dbReference>
<dbReference type="EnsemblMetazoa" id="ZK1290.4c.1">
    <molecule id="Q5H9N3-1"/>
    <property type="protein sequence ID" value="ZK1290.4c.1"/>
    <property type="gene ID" value="WBGene00003592"/>
</dbReference>
<dbReference type="GeneID" id="174225"/>
<dbReference type="KEGG" id="cel:CELE_ZK1290.4"/>
<dbReference type="UCSC" id="ZK1290.4c">
    <property type="organism name" value="c. elegans"/>
</dbReference>
<dbReference type="AGR" id="WB:WBGene00003592"/>
<dbReference type="CTD" id="174225"/>
<dbReference type="WormBase" id="ZK1290.4a">
    <molecule id="Q5H9N3-3"/>
    <property type="protein sequence ID" value="CE37597"/>
    <property type="gene ID" value="WBGene00003592"/>
    <property type="gene designation" value="nfi-1"/>
</dbReference>
<dbReference type="WormBase" id="ZK1290.4b">
    <molecule id="Q5H9N3-2"/>
    <property type="protein sequence ID" value="CE38016"/>
    <property type="gene ID" value="WBGene00003592"/>
    <property type="gene designation" value="nfi-1"/>
</dbReference>
<dbReference type="WormBase" id="ZK1290.4c">
    <molecule id="Q5H9N3-1"/>
    <property type="protein sequence ID" value="CE38017"/>
    <property type="gene ID" value="WBGene00003592"/>
    <property type="gene designation" value="nfi-1"/>
</dbReference>
<dbReference type="eggNOG" id="KOG3663">
    <property type="taxonomic scope" value="Eukaryota"/>
</dbReference>
<dbReference type="GeneTree" id="ENSGT00950000182916"/>
<dbReference type="HOGENOM" id="CLU_014774_0_0_1"/>
<dbReference type="InParanoid" id="Q5H9N3"/>
<dbReference type="OMA" id="EVHQLIG"/>
<dbReference type="OrthoDB" id="10055441at2759"/>
<dbReference type="SignaLink" id="Q5H9N3"/>
<dbReference type="PRO" id="PR:Q5H9N3"/>
<dbReference type="Proteomes" id="UP000001940">
    <property type="component" value="Chromosome II"/>
</dbReference>
<dbReference type="Bgee" id="WBGene00003592">
    <property type="expression patterns" value="Expressed in germ line (C elegans) and 5 other cell types or tissues"/>
</dbReference>
<dbReference type="ExpressionAtlas" id="Q5H9N3">
    <property type="expression patterns" value="baseline and differential"/>
</dbReference>
<dbReference type="GO" id="GO:0005634">
    <property type="term" value="C:nucleus"/>
    <property type="evidence" value="ECO:0000318"/>
    <property type="project" value="GO_Central"/>
</dbReference>
<dbReference type="GO" id="GO:0000981">
    <property type="term" value="F:DNA-binding transcription factor activity, RNA polymerase II-specific"/>
    <property type="evidence" value="ECO:0000318"/>
    <property type="project" value="GO_Central"/>
</dbReference>
<dbReference type="GO" id="GO:0000978">
    <property type="term" value="F:RNA polymerase II cis-regulatory region sequence-specific DNA binding"/>
    <property type="evidence" value="ECO:0000318"/>
    <property type="project" value="GO_Central"/>
</dbReference>
<dbReference type="GO" id="GO:0000977">
    <property type="term" value="F:RNA polymerase II transcription regulatory region sequence-specific DNA binding"/>
    <property type="evidence" value="ECO:0000314"/>
    <property type="project" value="WormBase"/>
</dbReference>
<dbReference type="GO" id="GO:0043565">
    <property type="term" value="F:sequence-specific DNA binding"/>
    <property type="evidence" value="ECO:0000314"/>
    <property type="project" value="WormBase"/>
</dbReference>
<dbReference type="GO" id="GO:0008340">
    <property type="term" value="P:determination of adult lifespan"/>
    <property type="evidence" value="ECO:0000315"/>
    <property type="project" value="UniProtKB"/>
</dbReference>
<dbReference type="GO" id="GO:0006260">
    <property type="term" value="P:DNA replication"/>
    <property type="evidence" value="ECO:0007669"/>
    <property type="project" value="UniProtKB-KW"/>
</dbReference>
<dbReference type="GO" id="GO:0045944">
    <property type="term" value="P:positive regulation of transcription by RNA polymerase II"/>
    <property type="evidence" value="ECO:0000315"/>
    <property type="project" value="WormBase"/>
</dbReference>
<dbReference type="GO" id="GO:0046662">
    <property type="term" value="P:regulation of egg-laying behavior"/>
    <property type="evidence" value="ECO:0000315"/>
    <property type="project" value="WormBase"/>
</dbReference>
<dbReference type="GO" id="GO:0040012">
    <property type="term" value="P:regulation of locomotion"/>
    <property type="evidence" value="ECO:0000315"/>
    <property type="project" value="WormBase"/>
</dbReference>
<dbReference type="GO" id="GO:0043051">
    <property type="term" value="P:regulation of nematode pharyngeal pumping"/>
    <property type="evidence" value="ECO:0000315"/>
    <property type="project" value="UniProtKB"/>
</dbReference>
<dbReference type="GO" id="GO:0006357">
    <property type="term" value="P:regulation of transcription by RNA polymerase II"/>
    <property type="evidence" value="ECO:0000318"/>
    <property type="project" value="GO_Central"/>
</dbReference>
<dbReference type="InterPro" id="IPR000647">
    <property type="entry name" value="CTF/NFI"/>
</dbReference>
<dbReference type="InterPro" id="IPR020604">
    <property type="entry name" value="CTF/NFI_DNA-bd-dom"/>
</dbReference>
<dbReference type="InterPro" id="IPR019548">
    <property type="entry name" value="CTF/NFI_DNA-bd_N"/>
</dbReference>
<dbReference type="InterPro" id="IPR003619">
    <property type="entry name" value="MAD_homology1_Dwarfin-type"/>
</dbReference>
<dbReference type="PANTHER" id="PTHR11492">
    <property type="entry name" value="NUCLEAR FACTOR I"/>
    <property type="match status" value="1"/>
</dbReference>
<dbReference type="PANTHER" id="PTHR11492:SF8">
    <property type="entry name" value="NUCLEAR FACTOR I, ISOFORM B"/>
    <property type="match status" value="1"/>
</dbReference>
<dbReference type="Pfam" id="PF03165">
    <property type="entry name" value="MH1"/>
    <property type="match status" value="1"/>
</dbReference>
<dbReference type="Pfam" id="PF10524">
    <property type="entry name" value="NfI_DNAbd_pre-N"/>
    <property type="match status" value="1"/>
</dbReference>
<dbReference type="SMART" id="SM00523">
    <property type="entry name" value="DWA"/>
    <property type="match status" value="1"/>
</dbReference>
<dbReference type="PROSITE" id="PS51080">
    <property type="entry name" value="CTF_NFI_2"/>
    <property type="match status" value="1"/>
</dbReference>
<keyword id="KW-0010">Activator</keyword>
<keyword id="KW-0025">Alternative splicing</keyword>
<keyword id="KW-0235">DNA replication</keyword>
<keyword id="KW-0238">DNA-binding</keyword>
<keyword id="KW-0539">Nucleus</keyword>
<keyword id="KW-1185">Reference proteome</keyword>
<keyword id="KW-0804">Transcription</keyword>
<keyword id="KW-0805">Transcription regulation</keyword>
<sequence length="823" mass="89569">MEPHLKIDVSSASGSTTTGATASTSEAPQDSQAQQTMPPPSSDWSNQFNSPEAVSPKANGIKCFSPYSQEDMGPFVEQLLPFVRASAYNWFHLQAAKRRHFKEFDKKMCASEENAKLAELQNDRDELKVKWASRLLGKIKKDIQNDDKEAFISAINGSEPNKCIISVADQKGKMRRIDCLRQADKVWRLDLVTIILFKGIPLESTDGERLERSEACVHPLCINPFHMAISVRGLDVFMANYLKDVDTKITLTYPRNDELSDTVMVKQEPGEQTIVAPHAVLGTSSTHTRVWETNSERNAETIIITYDPQKACHTYFGGRATLAQQSLSAGNTYMVNKTAVDNNFFNAKRSVLCLPPPPIQNCFPYPIAGTSDSQQMDMSEDSNDGPSEKRSRDISSHDSPNSSTNDEVRRIVESGTEKLVLGSSIWAAPGQFSRTQQNQGAPGTSRQVRPLPDFQSQDSARSPGAFRSTAKPVCRMTVNTGNHGDVGVVVVDERNREHVIHAQHIVNALSSLRTTPSMRESPVGRKRMHPHTSNSFEFLNCNQEMNKNEGALGSDISPTHTAVSNLISRESSGYMASPTKFTTARGDTTSFSKIFQKIEEKHLQHNQPSTSYCNSQIQPPILSSKPVDSSVKLIAPVAVKPIMSGCNSIIPSPITTPRITPSFRMLEDDSLINVLGQLAHSNDGTTLNDSFIQHLIDTNSRSPLLSSGNAFSALSMGAVSGLVPGNSIHRPDSSASNGSNSLGVAMGLAVPQNIALAVQQTQNAMSPLHQIRVSVGAPPACSPSSSNSSLGAANQAPVSNTPQDPNAPKLPTDFSHALRNEKK</sequence>
<reference evidence="7" key="1">
    <citation type="journal article" date="1998" name="Science">
        <title>Genome sequence of the nematode C. elegans: a platform for investigating biology.</title>
        <authorList>
            <consortium name="The C. elegans sequencing consortium"/>
        </authorList>
    </citation>
    <scope>NUCLEOTIDE SEQUENCE [LARGE SCALE GENOMIC DNA]</scope>
    <source>
        <strain evidence="7">Bristol N2</strain>
    </source>
</reference>
<reference evidence="6" key="2">
    <citation type="journal article" date="2005" name="BMC Dev. Biol.">
        <title>nfi-I affects behavior and life-span in C. elegans but is not essential for DNA replication or survival.</title>
        <authorList>
            <person name="Lazakovitch E."/>
            <person name="Kalb J.M."/>
            <person name="Matsumoto R."/>
            <person name="Hirono K."/>
            <person name="Kohara Y."/>
            <person name="Gronostajski R.M."/>
        </authorList>
    </citation>
    <scope>FUNCTION</scope>
    <scope>TISSUE SPECIFICITY</scope>
    <scope>DEVELOPMENTAL STAGE</scope>
    <scope>DISRUPTION PHENOTYPE</scope>
</reference>
<reference evidence="6" key="3">
    <citation type="journal article" date="2008" name="Dev. Dyn.">
        <title>Lifespan extension and increased pumping rate accompany pharyngeal muscle-specific expression of nfi-1 in C. elegans.</title>
        <authorList>
            <person name="Lazakovitch E."/>
            <person name="Kalb J.M."/>
            <person name="Gronostajski R.M."/>
        </authorList>
    </citation>
    <scope>FUNCTION</scope>
    <scope>SUBCELLULAR LOCATION</scope>
    <scope>TISSUE SPECIFICITY</scope>
    <scope>DISRUPTION PHENOTYPE</scope>
</reference>
<reference evidence="6" key="4">
    <citation type="journal article" date="2009" name="Proc. Natl. Acad. Sci. U.S.A.">
        <title>DNA-binding specificity and in vivo targets of Caenorhabditis elegans nuclear factor I.</title>
        <authorList>
            <person name="Whittle C.M."/>
            <person name="Lazakovitch E."/>
            <person name="Gronostajski R.M."/>
            <person name="Lieb J.D."/>
        </authorList>
    </citation>
    <scope>FUNCTION</scope>
</reference>
<accession>Q5H9N3</accession>
<accession>Q09631</accession>
<accession>Q5H9N2</accession>
<comment type="function">
    <text evidence="3 4 5">Probable transcription factor which recognizes and binds the palindromic sequence 5'-TTGGCANNNTGCCAA-3' present in promoters (PubMed:16242019, PubMed:19584245). Plays a role in locomotion, pharyngeal pumping, egg-laying, and life span (PubMed:16242019, PubMed:18651662, PubMed:19584245).</text>
</comment>
<comment type="subcellular location">
    <subcellularLocation>
        <location evidence="1 4">Nucleus</location>
    </subcellularLocation>
</comment>
<comment type="alternative products">
    <event type="alternative splicing"/>
    <isoform>
        <id>Q5H9N3-1</id>
        <name evidence="10">c</name>
        <sequence type="displayed"/>
    </isoform>
    <isoform>
        <id>Q5H9N3-2</id>
        <name evidence="9">b</name>
        <sequence type="described" ref="VSP_061000"/>
    </isoform>
    <isoform>
        <id>Q5H9N3-3</id>
        <name evidence="8">a</name>
        <sequence type="described" ref="VSP_061001"/>
    </isoform>
</comment>
<comment type="tissue specificity">
    <text evidence="3 4">Expressed in muscles, neurons and intestinal cells.</text>
</comment>
<comment type="developmental stage">
    <text evidence="3">Expressed maternally in 2-cell embryos, zygotically in early and mid-embryogenesis; expression decreases after gastrulation and is abolished in L1 larvae, but re-expressed in the adult gonad.</text>
</comment>
<comment type="disruption phenotype">
    <text evidence="3 4">Defects in locomotion, pharyngeal pumping rate, egg-laying, and reduced life-span.</text>
</comment>
<comment type="similarity">
    <text evidence="1">Belongs to the CTF/NF-I family.</text>
</comment>
<comment type="caution">
    <text evidence="3">Apparent discrepancy in expression data: a transgenic promoter based on about 4 kb from the 5' flank of the gene, drives reporter gene expression in larval L1-L4 stages, but endogenous transcripts are not detected in L1 larvae using in-situ hybridisation.</text>
</comment>